<evidence type="ECO:0000255" key="1">
    <source>
        <dbReference type="HAMAP-Rule" id="MF_00420"/>
    </source>
</evidence>
<comment type="function">
    <text evidence="1">Part of the phosphoribosylformylglycinamidine synthase complex involved in the purines biosynthetic pathway. Catalyzes the ATP-dependent conversion of formylglycinamide ribonucleotide (FGAR) and glutamine to yield formylglycinamidine ribonucleotide (FGAM) and glutamate. The FGAM synthase complex is composed of three subunits. PurQ produces an ammonia molecule by converting glutamine to glutamate. PurL transfers the ammonia molecule to FGAR to form FGAM in an ATP-dependent manner. PurS interacts with PurQ and PurL and is thought to assist in the transfer of the ammonia molecule from PurQ to PurL.</text>
</comment>
<comment type="catalytic activity">
    <reaction evidence="1">
        <text>N(2)-formyl-N(1)-(5-phospho-beta-D-ribosyl)glycinamide + L-glutamine + ATP + H2O = 2-formamido-N(1)-(5-O-phospho-beta-D-ribosyl)acetamidine + L-glutamate + ADP + phosphate + H(+)</text>
        <dbReference type="Rhea" id="RHEA:17129"/>
        <dbReference type="ChEBI" id="CHEBI:15377"/>
        <dbReference type="ChEBI" id="CHEBI:15378"/>
        <dbReference type="ChEBI" id="CHEBI:29985"/>
        <dbReference type="ChEBI" id="CHEBI:30616"/>
        <dbReference type="ChEBI" id="CHEBI:43474"/>
        <dbReference type="ChEBI" id="CHEBI:58359"/>
        <dbReference type="ChEBI" id="CHEBI:147286"/>
        <dbReference type="ChEBI" id="CHEBI:147287"/>
        <dbReference type="ChEBI" id="CHEBI:456216"/>
        <dbReference type="EC" id="6.3.5.3"/>
    </reaction>
</comment>
<comment type="pathway">
    <text evidence="1">Purine metabolism; IMP biosynthesis via de novo pathway; 5-amino-1-(5-phospho-D-ribosyl)imidazole from N(2)-formyl-N(1)-(5-phospho-D-ribosyl)glycinamide: step 1/2.</text>
</comment>
<comment type="subunit">
    <text evidence="1">Monomer. Part of the FGAM synthase complex composed of 1 PurL, 1 PurQ and 2 PurS subunits.</text>
</comment>
<comment type="subcellular location">
    <subcellularLocation>
        <location evidence="1">Cytoplasm</location>
    </subcellularLocation>
</comment>
<comment type="similarity">
    <text evidence="1">Belongs to the FGAMS family.</text>
</comment>
<accession>Q8DIA7</accession>
<keyword id="KW-0067">ATP-binding</keyword>
<keyword id="KW-0963">Cytoplasm</keyword>
<keyword id="KW-0436">Ligase</keyword>
<keyword id="KW-0460">Magnesium</keyword>
<keyword id="KW-0479">Metal-binding</keyword>
<keyword id="KW-0547">Nucleotide-binding</keyword>
<keyword id="KW-0658">Purine biosynthesis</keyword>
<keyword id="KW-1185">Reference proteome</keyword>
<gene>
    <name evidence="1" type="primary">purL</name>
    <name type="ordered locus">tlr1683</name>
</gene>
<dbReference type="EC" id="6.3.5.3" evidence="1"/>
<dbReference type="EMBL" id="BA000039">
    <property type="protein sequence ID" value="BAC09235.1"/>
    <property type="molecule type" value="Genomic_DNA"/>
</dbReference>
<dbReference type="RefSeq" id="NP_682473.1">
    <property type="nucleotide sequence ID" value="NC_004113.1"/>
</dbReference>
<dbReference type="RefSeq" id="WP_011057520.1">
    <property type="nucleotide sequence ID" value="NC_004113.1"/>
</dbReference>
<dbReference type="SMR" id="Q8DIA7"/>
<dbReference type="STRING" id="197221.gene:10748285"/>
<dbReference type="EnsemblBacteria" id="BAC09235">
    <property type="protein sequence ID" value="BAC09235"/>
    <property type="gene ID" value="BAC09235"/>
</dbReference>
<dbReference type="KEGG" id="tel:tlr1683"/>
<dbReference type="PATRIC" id="fig|197221.4.peg.1764"/>
<dbReference type="eggNOG" id="COG0046">
    <property type="taxonomic scope" value="Bacteria"/>
</dbReference>
<dbReference type="UniPathway" id="UPA00074">
    <property type="reaction ID" value="UER00128"/>
</dbReference>
<dbReference type="Proteomes" id="UP000000440">
    <property type="component" value="Chromosome"/>
</dbReference>
<dbReference type="GO" id="GO:0005737">
    <property type="term" value="C:cytoplasm"/>
    <property type="evidence" value="ECO:0007669"/>
    <property type="project" value="UniProtKB-SubCell"/>
</dbReference>
<dbReference type="GO" id="GO:0005524">
    <property type="term" value="F:ATP binding"/>
    <property type="evidence" value="ECO:0007669"/>
    <property type="project" value="UniProtKB-UniRule"/>
</dbReference>
<dbReference type="GO" id="GO:0000287">
    <property type="term" value="F:magnesium ion binding"/>
    <property type="evidence" value="ECO:0007669"/>
    <property type="project" value="UniProtKB-UniRule"/>
</dbReference>
<dbReference type="GO" id="GO:0004642">
    <property type="term" value="F:phosphoribosylformylglycinamidine synthase activity"/>
    <property type="evidence" value="ECO:0007669"/>
    <property type="project" value="UniProtKB-UniRule"/>
</dbReference>
<dbReference type="GO" id="GO:0006189">
    <property type="term" value="P:'de novo' IMP biosynthetic process"/>
    <property type="evidence" value="ECO:0007669"/>
    <property type="project" value="UniProtKB-UniRule"/>
</dbReference>
<dbReference type="CDD" id="cd02203">
    <property type="entry name" value="PurL_repeat1"/>
    <property type="match status" value="1"/>
</dbReference>
<dbReference type="CDD" id="cd02204">
    <property type="entry name" value="PurL_repeat2"/>
    <property type="match status" value="1"/>
</dbReference>
<dbReference type="FunFam" id="3.30.1330.10:FF:000004">
    <property type="entry name" value="Phosphoribosylformylglycinamidine synthase subunit PurL"/>
    <property type="match status" value="1"/>
</dbReference>
<dbReference type="Gene3D" id="3.90.650.10">
    <property type="entry name" value="PurM-like C-terminal domain"/>
    <property type="match status" value="2"/>
</dbReference>
<dbReference type="Gene3D" id="3.30.1330.10">
    <property type="entry name" value="PurM-like, N-terminal domain"/>
    <property type="match status" value="2"/>
</dbReference>
<dbReference type="HAMAP" id="MF_00420">
    <property type="entry name" value="PurL_2"/>
    <property type="match status" value="1"/>
</dbReference>
<dbReference type="InterPro" id="IPR010074">
    <property type="entry name" value="PRibForGlyAmidine_synth_PurL"/>
</dbReference>
<dbReference type="InterPro" id="IPR041609">
    <property type="entry name" value="PurL_linker"/>
</dbReference>
<dbReference type="InterPro" id="IPR010918">
    <property type="entry name" value="PurM-like_C_dom"/>
</dbReference>
<dbReference type="InterPro" id="IPR036676">
    <property type="entry name" value="PurM-like_C_sf"/>
</dbReference>
<dbReference type="InterPro" id="IPR016188">
    <property type="entry name" value="PurM-like_N"/>
</dbReference>
<dbReference type="InterPro" id="IPR036921">
    <property type="entry name" value="PurM-like_N_sf"/>
</dbReference>
<dbReference type="NCBIfam" id="TIGR01736">
    <property type="entry name" value="FGAM_synth_II"/>
    <property type="match status" value="1"/>
</dbReference>
<dbReference type="NCBIfam" id="NF002290">
    <property type="entry name" value="PRK01213.1"/>
    <property type="match status" value="1"/>
</dbReference>
<dbReference type="PANTHER" id="PTHR43555">
    <property type="entry name" value="PHOSPHORIBOSYLFORMYLGLYCINAMIDINE SYNTHASE SUBUNIT PURL"/>
    <property type="match status" value="1"/>
</dbReference>
<dbReference type="PANTHER" id="PTHR43555:SF1">
    <property type="entry name" value="PHOSPHORIBOSYLFORMYLGLYCINAMIDINE SYNTHASE SUBUNIT PURL"/>
    <property type="match status" value="1"/>
</dbReference>
<dbReference type="Pfam" id="PF00586">
    <property type="entry name" value="AIRS"/>
    <property type="match status" value="2"/>
</dbReference>
<dbReference type="Pfam" id="PF02769">
    <property type="entry name" value="AIRS_C"/>
    <property type="match status" value="2"/>
</dbReference>
<dbReference type="Pfam" id="PF18072">
    <property type="entry name" value="FGAR-AT_linker"/>
    <property type="match status" value="1"/>
</dbReference>
<dbReference type="PIRSF" id="PIRSF001587">
    <property type="entry name" value="FGAM_synthase_II"/>
    <property type="match status" value="1"/>
</dbReference>
<dbReference type="SUPFAM" id="SSF56042">
    <property type="entry name" value="PurM C-terminal domain-like"/>
    <property type="match status" value="2"/>
</dbReference>
<dbReference type="SUPFAM" id="SSF55326">
    <property type="entry name" value="PurM N-terminal domain-like"/>
    <property type="match status" value="2"/>
</dbReference>
<protein>
    <recommendedName>
        <fullName evidence="1">Phosphoribosylformylglycinamidine synthase subunit PurL</fullName>
        <shortName evidence="1">FGAM synthase</shortName>
        <ecNumber evidence="1">6.3.5.3</ecNumber>
    </recommendedName>
    <alternativeName>
        <fullName evidence="1">Formylglycinamide ribonucleotide amidotransferase subunit II</fullName>
        <shortName evidence="1">FGAR amidotransferase II</shortName>
        <shortName evidence="1">FGAR-AT II</shortName>
    </alternativeName>
    <alternativeName>
        <fullName evidence="1">Glutamine amidotransferase PurL</fullName>
    </alternativeName>
    <alternativeName>
        <fullName evidence="1">Phosphoribosylformylglycinamidine synthase subunit II</fullName>
    </alternativeName>
</protein>
<proteinExistence type="inferred from homology"/>
<organism>
    <name type="scientific">Thermosynechococcus vestitus (strain NIES-2133 / IAM M-273 / BP-1)</name>
    <dbReference type="NCBI Taxonomy" id="197221"/>
    <lineage>
        <taxon>Bacteria</taxon>
        <taxon>Bacillati</taxon>
        <taxon>Cyanobacteriota</taxon>
        <taxon>Cyanophyceae</taxon>
        <taxon>Acaryochloridales</taxon>
        <taxon>Thermosynechococcaceae</taxon>
        <taxon>Thermosynechococcus</taxon>
    </lineage>
</organism>
<sequence>MSQTPLVTEAEITAEGLKPQEYTEIVRRLGRHPNRAELGMFGVMWSEHCCYKNSRLLLKQFPTQGPRVLVGPGENAGVVDLGDGLRLAFKIESHNHPSAIEPFQGAATGVGGILRDIFTMGARPIALLNALRFGDLKEAKTQQLVKGVVAGIAHYGNCVGVPTVGGEVYFDPCYAGNPLVNAMALGLMETPEIVKSAASGIGNPVLYVGSTTGRDGMGGASFASAELTDESMSDRPAVQVGDPFVEKCLIEACLEAFQTGAVVAAQDMGAAGLTCSTSEMAAKGGVGIELDLDKVPVREQGMVPYEFLLSESQERMLFVAAQGREAELIEIFQRWGLQAVVVGRVIAEPLVRVLYRGEVAAEVPARALAEETPLYERECPKEPPAYVQQARQWSVDQLPLPARSPAEILLTLLATPSIASKAWVYRQYDHEVQNNTLVFPGDGDAAVIRLRGTAKGIAATVDCPSRYVYLDPYEGGKAAVAEAARNLSCVGAEPLAVTDNLNFGSPETPVGYWQLANACRGLAEACRALQTPVTGGNVSLYNETIDSNGQPQPIYPTPVVGMVGLIADLQRVVGQGWRATGDAIYLLGLPLTTPLSDPRLSLGGSEYLAQIHGLVAGCPPQIDLDLEQRVQAVCRYGIQQGWIASAHDLSEGGLAVALAESCLSGQRGATIQLPEGTYPRWDALLFAEGGARILVSVPPREQVAWEAYAQAQLPNAWTRLGVVNGEDTELCIDSCNNSPLIRVTIKELDLAWRSPLPKYLD</sequence>
<feature type="chain" id="PRO_0000100496" description="Phosphoribosylformylglycinamidine synthase subunit PurL">
    <location>
        <begin position="1"/>
        <end position="761"/>
    </location>
</feature>
<feature type="active site" evidence="1">
    <location>
        <position position="48"/>
    </location>
</feature>
<feature type="active site" description="Proton acceptor" evidence="1">
    <location>
        <position position="94"/>
    </location>
</feature>
<feature type="binding site" evidence="1">
    <location>
        <position position="51"/>
    </location>
    <ligand>
        <name>ATP</name>
        <dbReference type="ChEBI" id="CHEBI:30616"/>
    </ligand>
</feature>
<feature type="binding site" evidence="1">
    <location>
        <position position="90"/>
    </location>
    <ligand>
        <name>ATP</name>
        <dbReference type="ChEBI" id="CHEBI:30616"/>
    </ligand>
</feature>
<feature type="binding site" evidence="1">
    <location>
        <position position="92"/>
    </location>
    <ligand>
        <name>Mg(2+)</name>
        <dbReference type="ChEBI" id="CHEBI:18420"/>
        <label>1</label>
    </ligand>
</feature>
<feature type="binding site" evidence="1">
    <location>
        <begin position="93"/>
        <end position="96"/>
    </location>
    <ligand>
        <name>substrate</name>
    </ligand>
</feature>
<feature type="binding site" evidence="1">
    <location>
        <position position="115"/>
    </location>
    <ligand>
        <name>substrate</name>
    </ligand>
</feature>
<feature type="binding site" evidence="1">
    <location>
        <position position="116"/>
    </location>
    <ligand>
        <name>Mg(2+)</name>
        <dbReference type="ChEBI" id="CHEBI:18420"/>
        <label>2</label>
    </ligand>
</feature>
<feature type="binding site" evidence="1">
    <location>
        <position position="239"/>
    </location>
    <ligand>
        <name>substrate</name>
    </ligand>
</feature>
<feature type="binding site" evidence="1">
    <location>
        <position position="267"/>
    </location>
    <ligand>
        <name>Mg(2+)</name>
        <dbReference type="ChEBI" id="CHEBI:18420"/>
        <label>2</label>
    </ligand>
</feature>
<feature type="binding site" evidence="1">
    <location>
        <begin position="311"/>
        <end position="313"/>
    </location>
    <ligand>
        <name>substrate</name>
    </ligand>
</feature>
<feature type="binding site" evidence="1">
    <location>
        <position position="499"/>
    </location>
    <ligand>
        <name>ATP</name>
        <dbReference type="ChEBI" id="CHEBI:30616"/>
    </ligand>
</feature>
<feature type="binding site" evidence="1">
    <location>
        <position position="536"/>
    </location>
    <ligand>
        <name>ATP</name>
        <dbReference type="ChEBI" id="CHEBI:30616"/>
    </ligand>
</feature>
<feature type="binding site" evidence="1">
    <location>
        <position position="537"/>
    </location>
    <ligand>
        <name>Mg(2+)</name>
        <dbReference type="ChEBI" id="CHEBI:18420"/>
        <label>1</label>
    </ligand>
</feature>
<feature type="binding site" evidence="1">
    <location>
        <position position="539"/>
    </location>
    <ligand>
        <name>substrate</name>
    </ligand>
</feature>
<name>PURL_THEVB</name>
<reference key="1">
    <citation type="journal article" date="2002" name="DNA Res.">
        <title>Complete genome structure of the thermophilic cyanobacterium Thermosynechococcus elongatus BP-1.</title>
        <authorList>
            <person name="Nakamura Y."/>
            <person name="Kaneko T."/>
            <person name="Sato S."/>
            <person name="Ikeuchi M."/>
            <person name="Katoh H."/>
            <person name="Sasamoto S."/>
            <person name="Watanabe A."/>
            <person name="Iriguchi M."/>
            <person name="Kawashima K."/>
            <person name="Kimura T."/>
            <person name="Kishida Y."/>
            <person name="Kiyokawa C."/>
            <person name="Kohara M."/>
            <person name="Matsumoto M."/>
            <person name="Matsuno A."/>
            <person name="Nakazaki N."/>
            <person name="Shimpo S."/>
            <person name="Sugimoto M."/>
            <person name="Takeuchi C."/>
            <person name="Yamada M."/>
            <person name="Tabata S."/>
        </authorList>
    </citation>
    <scope>NUCLEOTIDE SEQUENCE [LARGE SCALE GENOMIC DNA]</scope>
    <source>
        <strain>NIES-2133 / IAM M-273 / BP-1</strain>
    </source>
</reference>